<name>MUTS_CLOK1</name>
<sequence length="871" mass="99500">MGLTPMMRQYMEIKENYKDCILFFRLGDFYEMFFDDAKIAAAELELVLTARECGLKEKAPMCGIPYHAAKSYIGRMVNKGYKIAICEQLEDPAQSKGIVKRGIIKVITPGTYMDSYFLDENENNYIMCLYINNNEGSNCALCFADISTGEFNCTDTPFNLSVILDEICKFNPREIIIQEDIDSNILQGIVEVFNETFSRVDECYFQKGEEVLREQFKDLNLREYTPEIIKCGGALVKYIKHTQKTNLSHINKFQYYNIVDYLTIDINSKRNLEIVESLRESKKKGSLLGVIDKTNTSMGGRQLRKWIEQPLIDRNKIMERLDSVEEILNNICYHEDLKEALKNIYDIERLAGKISSKSVNAKELNSLKSSIEKIPDIKVILSNFETSLLKNMYKNLDELKDIYMLLDKAILDNPSVSLKEGNLIKEGYDSEIDRLKEAKVKGKDWIASLESSERELTKIKSLKIGYNKVFGYYIEVTKSNLNLVPEHRYIRKQTLSNAERYITPELKEMEDKILGAEEKLIYLEYNAFVEVRDKVEKEVTRIQNSARIISEVDCLTSLARAALENNYCKPEITLSDRVYIEEGRHPVVENMLSTGEFVSNDTDIDTGENQLLLITGPNMAGKSTYMRQVALVTIMAQIGSFVPAKSASISICDKIFTRIGASDDLASGKSTFMVEMWEVSNILKNATNKSLILLDEVGRGTSTYDGLSIAWSVIEYICRESKLRCKTLFATHYHELTKLEGKIKGVKNYCVSVKEVENNIVFLRKIIRGGADQSYGIEVAKLAGLPEEVLKRAREILNSLETEKTEESMEGTNLPKKKKEEKTSSQGEQLKFLDIEKENLINEIRDIDILNMTPMEGFNKLYDIIKKVKSI</sequence>
<protein>
    <recommendedName>
        <fullName evidence="1">DNA mismatch repair protein MutS</fullName>
    </recommendedName>
</protein>
<accession>B9E1Z0</accession>
<gene>
    <name evidence="1" type="primary">mutS</name>
    <name type="ordered locus">CKR_1464</name>
</gene>
<organism>
    <name type="scientific">Clostridium kluyveri (strain NBRC 12016)</name>
    <dbReference type="NCBI Taxonomy" id="583346"/>
    <lineage>
        <taxon>Bacteria</taxon>
        <taxon>Bacillati</taxon>
        <taxon>Bacillota</taxon>
        <taxon>Clostridia</taxon>
        <taxon>Eubacteriales</taxon>
        <taxon>Clostridiaceae</taxon>
        <taxon>Clostridium</taxon>
    </lineage>
</organism>
<keyword id="KW-0067">ATP-binding</keyword>
<keyword id="KW-0227">DNA damage</keyword>
<keyword id="KW-0234">DNA repair</keyword>
<keyword id="KW-0238">DNA-binding</keyword>
<keyword id="KW-0547">Nucleotide-binding</keyword>
<proteinExistence type="inferred from homology"/>
<dbReference type="EMBL" id="AP009049">
    <property type="protein sequence ID" value="BAH06515.1"/>
    <property type="molecule type" value="Genomic_DNA"/>
</dbReference>
<dbReference type="RefSeq" id="WP_012101969.1">
    <property type="nucleotide sequence ID" value="NC_011837.1"/>
</dbReference>
<dbReference type="SMR" id="B9E1Z0"/>
<dbReference type="KEGG" id="ckr:CKR_1464"/>
<dbReference type="HOGENOM" id="CLU_002472_4_0_9"/>
<dbReference type="Proteomes" id="UP000007969">
    <property type="component" value="Chromosome"/>
</dbReference>
<dbReference type="GO" id="GO:0005829">
    <property type="term" value="C:cytosol"/>
    <property type="evidence" value="ECO:0007669"/>
    <property type="project" value="TreeGrafter"/>
</dbReference>
<dbReference type="GO" id="GO:0005524">
    <property type="term" value="F:ATP binding"/>
    <property type="evidence" value="ECO:0007669"/>
    <property type="project" value="UniProtKB-UniRule"/>
</dbReference>
<dbReference type="GO" id="GO:0140664">
    <property type="term" value="F:ATP-dependent DNA damage sensor activity"/>
    <property type="evidence" value="ECO:0007669"/>
    <property type="project" value="InterPro"/>
</dbReference>
<dbReference type="GO" id="GO:0003684">
    <property type="term" value="F:damaged DNA binding"/>
    <property type="evidence" value="ECO:0007669"/>
    <property type="project" value="UniProtKB-UniRule"/>
</dbReference>
<dbReference type="GO" id="GO:0030983">
    <property type="term" value="F:mismatched DNA binding"/>
    <property type="evidence" value="ECO:0007669"/>
    <property type="project" value="InterPro"/>
</dbReference>
<dbReference type="GO" id="GO:0006298">
    <property type="term" value="P:mismatch repair"/>
    <property type="evidence" value="ECO:0007669"/>
    <property type="project" value="UniProtKB-UniRule"/>
</dbReference>
<dbReference type="CDD" id="cd03284">
    <property type="entry name" value="ABC_MutS1"/>
    <property type="match status" value="1"/>
</dbReference>
<dbReference type="FunFam" id="1.10.1420.10:FF:000007">
    <property type="entry name" value="DNA mismatch repair protein MutS"/>
    <property type="match status" value="1"/>
</dbReference>
<dbReference type="FunFam" id="3.40.1170.10:FF:000001">
    <property type="entry name" value="DNA mismatch repair protein MutS"/>
    <property type="match status" value="1"/>
</dbReference>
<dbReference type="FunFam" id="3.40.50.300:FF:001579">
    <property type="entry name" value="DNA mismatch repair protein MutS"/>
    <property type="match status" value="1"/>
</dbReference>
<dbReference type="Gene3D" id="1.10.1420.10">
    <property type="match status" value="2"/>
</dbReference>
<dbReference type="Gene3D" id="3.40.1170.10">
    <property type="entry name" value="DNA repair protein MutS, domain I"/>
    <property type="match status" value="1"/>
</dbReference>
<dbReference type="Gene3D" id="3.30.420.110">
    <property type="entry name" value="MutS, connector domain"/>
    <property type="match status" value="1"/>
</dbReference>
<dbReference type="Gene3D" id="3.40.50.300">
    <property type="entry name" value="P-loop containing nucleotide triphosphate hydrolases"/>
    <property type="match status" value="1"/>
</dbReference>
<dbReference type="HAMAP" id="MF_00096">
    <property type="entry name" value="MutS"/>
    <property type="match status" value="1"/>
</dbReference>
<dbReference type="InterPro" id="IPR005748">
    <property type="entry name" value="DNA_mismatch_repair_MutS"/>
</dbReference>
<dbReference type="InterPro" id="IPR007695">
    <property type="entry name" value="DNA_mismatch_repair_MutS-lik_N"/>
</dbReference>
<dbReference type="InterPro" id="IPR017261">
    <property type="entry name" value="DNA_mismatch_repair_MutS/MSH"/>
</dbReference>
<dbReference type="InterPro" id="IPR000432">
    <property type="entry name" value="DNA_mismatch_repair_MutS_C"/>
</dbReference>
<dbReference type="InterPro" id="IPR007861">
    <property type="entry name" value="DNA_mismatch_repair_MutS_clamp"/>
</dbReference>
<dbReference type="InterPro" id="IPR007696">
    <property type="entry name" value="DNA_mismatch_repair_MutS_core"/>
</dbReference>
<dbReference type="InterPro" id="IPR016151">
    <property type="entry name" value="DNA_mismatch_repair_MutS_N"/>
</dbReference>
<dbReference type="InterPro" id="IPR036187">
    <property type="entry name" value="DNA_mismatch_repair_MutS_sf"/>
</dbReference>
<dbReference type="InterPro" id="IPR007860">
    <property type="entry name" value="DNA_mmatch_repair_MutS_con_dom"/>
</dbReference>
<dbReference type="InterPro" id="IPR045076">
    <property type="entry name" value="MutS"/>
</dbReference>
<dbReference type="InterPro" id="IPR036678">
    <property type="entry name" value="MutS_con_dom_sf"/>
</dbReference>
<dbReference type="InterPro" id="IPR027417">
    <property type="entry name" value="P-loop_NTPase"/>
</dbReference>
<dbReference type="NCBIfam" id="TIGR01070">
    <property type="entry name" value="mutS1"/>
    <property type="match status" value="1"/>
</dbReference>
<dbReference type="NCBIfam" id="NF003810">
    <property type="entry name" value="PRK05399.1"/>
    <property type="match status" value="1"/>
</dbReference>
<dbReference type="PANTHER" id="PTHR11361:SF34">
    <property type="entry name" value="DNA MISMATCH REPAIR PROTEIN MSH1, MITOCHONDRIAL"/>
    <property type="match status" value="1"/>
</dbReference>
<dbReference type="PANTHER" id="PTHR11361">
    <property type="entry name" value="DNA MISMATCH REPAIR PROTEIN MUTS FAMILY MEMBER"/>
    <property type="match status" value="1"/>
</dbReference>
<dbReference type="Pfam" id="PF01624">
    <property type="entry name" value="MutS_I"/>
    <property type="match status" value="1"/>
</dbReference>
<dbReference type="Pfam" id="PF05188">
    <property type="entry name" value="MutS_II"/>
    <property type="match status" value="1"/>
</dbReference>
<dbReference type="Pfam" id="PF05192">
    <property type="entry name" value="MutS_III"/>
    <property type="match status" value="1"/>
</dbReference>
<dbReference type="Pfam" id="PF05190">
    <property type="entry name" value="MutS_IV"/>
    <property type="match status" value="1"/>
</dbReference>
<dbReference type="Pfam" id="PF00488">
    <property type="entry name" value="MutS_V"/>
    <property type="match status" value="1"/>
</dbReference>
<dbReference type="PIRSF" id="PIRSF037677">
    <property type="entry name" value="DNA_mis_repair_Msh6"/>
    <property type="match status" value="1"/>
</dbReference>
<dbReference type="SMART" id="SM00534">
    <property type="entry name" value="MUTSac"/>
    <property type="match status" value="1"/>
</dbReference>
<dbReference type="SMART" id="SM00533">
    <property type="entry name" value="MUTSd"/>
    <property type="match status" value="1"/>
</dbReference>
<dbReference type="SUPFAM" id="SSF55271">
    <property type="entry name" value="DNA repair protein MutS, domain I"/>
    <property type="match status" value="1"/>
</dbReference>
<dbReference type="SUPFAM" id="SSF53150">
    <property type="entry name" value="DNA repair protein MutS, domain II"/>
    <property type="match status" value="1"/>
</dbReference>
<dbReference type="SUPFAM" id="SSF48334">
    <property type="entry name" value="DNA repair protein MutS, domain III"/>
    <property type="match status" value="1"/>
</dbReference>
<dbReference type="SUPFAM" id="SSF52540">
    <property type="entry name" value="P-loop containing nucleoside triphosphate hydrolases"/>
    <property type="match status" value="1"/>
</dbReference>
<dbReference type="PROSITE" id="PS00486">
    <property type="entry name" value="DNA_MISMATCH_REPAIR_2"/>
    <property type="match status" value="1"/>
</dbReference>
<comment type="function">
    <text evidence="1">This protein is involved in the repair of mismatches in DNA. It is possible that it carries out the mismatch recognition step. This protein has a weak ATPase activity.</text>
</comment>
<comment type="similarity">
    <text evidence="1">Belongs to the DNA mismatch repair MutS family.</text>
</comment>
<reference key="1">
    <citation type="submission" date="2005-09" db="EMBL/GenBank/DDBJ databases">
        <title>Complete genome sequence of Clostridium kluyveri and comparative genomics of Clostridia species.</title>
        <authorList>
            <person name="Inui M."/>
            <person name="Nonaka H."/>
            <person name="Shinoda Y."/>
            <person name="Ikenaga Y."/>
            <person name="Abe M."/>
            <person name="Naito K."/>
            <person name="Vertes A.A."/>
            <person name="Yukawa H."/>
        </authorList>
    </citation>
    <scope>NUCLEOTIDE SEQUENCE [LARGE SCALE GENOMIC DNA]</scope>
    <source>
        <strain>NBRC 12016</strain>
    </source>
</reference>
<feature type="chain" id="PRO_1000118679" description="DNA mismatch repair protein MutS">
    <location>
        <begin position="1"/>
        <end position="871"/>
    </location>
</feature>
<feature type="region of interest" description="Disordered" evidence="2">
    <location>
        <begin position="801"/>
        <end position="825"/>
    </location>
</feature>
<feature type="binding site" evidence="1">
    <location>
        <begin position="616"/>
        <end position="623"/>
    </location>
    <ligand>
        <name>ATP</name>
        <dbReference type="ChEBI" id="CHEBI:30616"/>
    </ligand>
</feature>
<evidence type="ECO:0000255" key="1">
    <source>
        <dbReference type="HAMAP-Rule" id="MF_00096"/>
    </source>
</evidence>
<evidence type="ECO:0000256" key="2">
    <source>
        <dbReference type="SAM" id="MobiDB-lite"/>
    </source>
</evidence>